<feature type="chain" id="PRO_1000071743" description="Anthranilate phosphoribosyltransferase">
    <location>
        <begin position="1"/>
        <end position="344"/>
    </location>
</feature>
<feature type="binding site" evidence="1">
    <location>
        <position position="81"/>
    </location>
    <ligand>
        <name>5-phospho-alpha-D-ribose 1-diphosphate</name>
        <dbReference type="ChEBI" id="CHEBI:58017"/>
    </ligand>
</feature>
<feature type="binding site" evidence="1">
    <location>
        <position position="81"/>
    </location>
    <ligand>
        <name>anthranilate</name>
        <dbReference type="ChEBI" id="CHEBI:16567"/>
        <label>1</label>
    </ligand>
</feature>
<feature type="binding site" evidence="1">
    <location>
        <begin position="84"/>
        <end position="85"/>
    </location>
    <ligand>
        <name>5-phospho-alpha-D-ribose 1-diphosphate</name>
        <dbReference type="ChEBI" id="CHEBI:58017"/>
    </ligand>
</feature>
<feature type="binding site" evidence="1">
    <location>
        <position position="89"/>
    </location>
    <ligand>
        <name>5-phospho-alpha-D-ribose 1-diphosphate</name>
        <dbReference type="ChEBI" id="CHEBI:58017"/>
    </ligand>
</feature>
<feature type="binding site" evidence="1">
    <location>
        <begin position="91"/>
        <end position="94"/>
    </location>
    <ligand>
        <name>5-phospho-alpha-D-ribose 1-diphosphate</name>
        <dbReference type="ChEBI" id="CHEBI:58017"/>
    </ligand>
</feature>
<feature type="binding site" evidence="1">
    <location>
        <position position="93"/>
    </location>
    <ligand>
        <name>Mg(2+)</name>
        <dbReference type="ChEBI" id="CHEBI:18420"/>
        <label>1</label>
    </ligand>
</feature>
<feature type="binding site" evidence="1">
    <location>
        <begin position="109"/>
        <end position="117"/>
    </location>
    <ligand>
        <name>5-phospho-alpha-D-ribose 1-diphosphate</name>
        <dbReference type="ChEBI" id="CHEBI:58017"/>
    </ligand>
</feature>
<feature type="binding site" evidence="1">
    <location>
        <position position="112"/>
    </location>
    <ligand>
        <name>anthranilate</name>
        <dbReference type="ChEBI" id="CHEBI:16567"/>
        <label>1</label>
    </ligand>
</feature>
<feature type="binding site" evidence="1">
    <location>
        <position position="121"/>
    </location>
    <ligand>
        <name>5-phospho-alpha-D-ribose 1-diphosphate</name>
        <dbReference type="ChEBI" id="CHEBI:58017"/>
    </ligand>
</feature>
<feature type="binding site" evidence="1">
    <location>
        <position position="167"/>
    </location>
    <ligand>
        <name>anthranilate</name>
        <dbReference type="ChEBI" id="CHEBI:16567"/>
        <label>2</label>
    </ligand>
</feature>
<feature type="binding site" evidence="1">
    <location>
        <position position="226"/>
    </location>
    <ligand>
        <name>Mg(2+)</name>
        <dbReference type="ChEBI" id="CHEBI:18420"/>
        <label>2</label>
    </ligand>
</feature>
<feature type="binding site" evidence="1">
    <location>
        <position position="227"/>
    </location>
    <ligand>
        <name>Mg(2+)</name>
        <dbReference type="ChEBI" id="CHEBI:18420"/>
        <label>1</label>
    </ligand>
</feature>
<feature type="binding site" evidence="1">
    <location>
        <position position="227"/>
    </location>
    <ligand>
        <name>Mg(2+)</name>
        <dbReference type="ChEBI" id="CHEBI:18420"/>
        <label>2</label>
    </ligand>
</feature>
<reference key="1">
    <citation type="submission" date="2007-04" db="EMBL/GenBank/DDBJ databases">
        <title>Complete genome sequence of the nitrogen-fixing bacterium Azorhizobium caulinodans ORS571.</title>
        <authorList>
            <person name="Lee K.B."/>
            <person name="Backer P.D."/>
            <person name="Aono T."/>
            <person name="Liu C.T."/>
            <person name="Suzuki S."/>
            <person name="Suzuki T."/>
            <person name="Kaneko T."/>
            <person name="Yamada M."/>
            <person name="Tabata S."/>
            <person name="Kupfer D.M."/>
            <person name="Najar F.Z."/>
            <person name="Wiley G.B."/>
            <person name="Roe B."/>
            <person name="Binnewies T."/>
            <person name="Ussery D."/>
            <person name="Vereecke D."/>
            <person name="Gevers D."/>
            <person name="Holsters M."/>
            <person name="Oyaizu H."/>
        </authorList>
    </citation>
    <scope>NUCLEOTIDE SEQUENCE [LARGE SCALE GENOMIC DNA]</scope>
    <source>
        <strain>ATCC 43989 / DSM 5975 / JCM 20966 / LMG 6465 / NBRC 14845 / NCIMB 13405 / ORS 571</strain>
    </source>
</reference>
<accession>A8I839</accession>
<organism>
    <name type="scientific">Azorhizobium caulinodans (strain ATCC 43989 / DSM 5975 / JCM 20966 / LMG 6465 / NBRC 14845 / NCIMB 13405 / ORS 571)</name>
    <dbReference type="NCBI Taxonomy" id="438753"/>
    <lineage>
        <taxon>Bacteria</taxon>
        <taxon>Pseudomonadati</taxon>
        <taxon>Pseudomonadota</taxon>
        <taxon>Alphaproteobacteria</taxon>
        <taxon>Hyphomicrobiales</taxon>
        <taxon>Xanthobacteraceae</taxon>
        <taxon>Azorhizobium</taxon>
    </lineage>
</organism>
<name>TRPD_AZOC5</name>
<comment type="function">
    <text evidence="1">Catalyzes the transfer of the phosphoribosyl group of 5-phosphorylribose-1-pyrophosphate (PRPP) to anthranilate to yield N-(5'-phosphoribosyl)-anthranilate (PRA).</text>
</comment>
<comment type="catalytic activity">
    <reaction evidence="1">
        <text>N-(5-phospho-beta-D-ribosyl)anthranilate + diphosphate = 5-phospho-alpha-D-ribose 1-diphosphate + anthranilate</text>
        <dbReference type="Rhea" id="RHEA:11768"/>
        <dbReference type="ChEBI" id="CHEBI:16567"/>
        <dbReference type="ChEBI" id="CHEBI:18277"/>
        <dbReference type="ChEBI" id="CHEBI:33019"/>
        <dbReference type="ChEBI" id="CHEBI:58017"/>
        <dbReference type="EC" id="2.4.2.18"/>
    </reaction>
</comment>
<comment type="cofactor">
    <cofactor evidence="1">
        <name>Mg(2+)</name>
        <dbReference type="ChEBI" id="CHEBI:18420"/>
    </cofactor>
    <text evidence="1">Binds 2 magnesium ions per monomer.</text>
</comment>
<comment type="pathway">
    <text evidence="1">Amino-acid biosynthesis; L-tryptophan biosynthesis; L-tryptophan from chorismate: step 2/5.</text>
</comment>
<comment type="subunit">
    <text evidence="1">Homodimer.</text>
</comment>
<comment type="similarity">
    <text evidence="1">Belongs to the anthranilate phosphoribosyltransferase family.</text>
</comment>
<gene>
    <name evidence="1" type="primary">trpD</name>
    <name type="ordered locus">AZC_2206</name>
</gene>
<proteinExistence type="inferred from homology"/>
<protein>
    <recommendedName>
        <fullName evidence="1">Anthranilate phosphoribosyltransferase</fullName>
        <ecNumber evidence="1">2.4.2.18</ecNumber>
    </recommendedName>
</protein>
<evidence type="ECO:0000255" key="1">
    <source>
        <dbReference type="HAMAP-Rule" id="MF_00211"/>
    </source>
</evidence>
<sequence>MERFRPLLNKVAMGTALNRDEAAYAFDKMMSGETTPSQMGALLMGLRVRGETVDEIVGAVSVMRAKMLTVDAPVGSVDVVGTGGDASGSYNISTCASFIVAGAGVPVAKHGNRALSSKSGAADVLAALGVRIDLAPAAISRCIAETGIGFMFAPTHHPAMKNVGPTRVELGTRTIFNLLGPLSNPAGVKRQMVGVFAKAWLSPLAEVLKALGSERAWVVHGSDGLDEITISGTTDVASLEDGRVHTFEISPEDVGLTRAAPEALRGGDAEHNAAALRAVLEGAPGAYRDVAVMNAGAALLISGRAASLRDGVDMAKASIDSGAAKAKLDQLARATQALAPQVDA</sequence>
<keyword id="KW-0028">Amino-acid biosynthesis</keyword>
<keyword id="KW-0057">Aromatic amino acid biosynthesis</keyword>
<keyword id="KW-0328">Glycosyltransferase</keyword>
<keyword id="KW-0460">Magnesium</keyword>
<keyword id="KW-0479">Metal-binding</keyword>
<keyword id="KW-1185">Reference proteome</keyword>
<keyword id="KW-0808">Transferase</keyword>
<keyword id="KW-0822">Tryptophan biosynthesis</keyword>
<dbReference type="EC" id="2.4.2.18" evidence="1"/>
<dbReference type="EMBL" id="AP009384">
    <property type="protein sequence ID" value="BAF88204.1"/>
    <property type="molecule type" value="Genomic_DNA"/>
</dbReference>
<dbReference type="RefSeq" id="WP_012170733.1">
    <property type="nucleotide sequence ID" value="NC_009937.1"/>
</dbReference>
<dbReference type="SMR" id="A8I839"/>
<dbReference type="STRING" id="438753.AZC_2206"/>
<dbReference type="KEGG" id="azc:AZC_2206"/>
<dbReference type="eggNOG" id="COG0547">
    <property type="taxonomic scope" value="Bacteria"/>
</dbReference>
<dbReference type="HOGENOM" id="CLU_034315_2_1_5"/>
<dbReference type="UniPathway" id="UPA00035">
    <property type="reaction ID" value="UER00041"/>
</dbReference>
<dbReference type="Proteomes" id="UP000000270">
    <property type="component" value="Chromosome"/>
</dbReference>
<dbReference type="GO" id="GO:0005829">
    <property type="term" value="C:cytosol"/>
    <property type="evidence" value="ECO:0007669"/>
    <property type="project" value="TreeGrafter"/>
</dbReference>
<dbReference type="GO" id="GO:0004048">
    <property type="term" value="F:anthranilate phosphoribosyltransferase activity"/>
    <property type="evidence" value="ECO:0007669"/>
    <property type="project" value="UniProtKB-UniRule"/>
</dbReference>
<dbReference type="GO" id="GO:0000287">
    <property type="term" value="F:magnesium ion binding"/>
    <property type="evidence" value="ECO:0007669"/>
    <property type="project" value="UniProtKB-UniRule"/>
</dbReference>
<dbReference type="GO" id="GO:0000162">
    <property type="term" value="P:L-tryptophan biosynthetic process"/>
    <property type="evidence" value="ECO:0007669"/>
    <property type="project" value="UniProtKB-UniRule"/>
</dbReference>
<dbReference type="FunFam" id="3.40.1030.10:FF:000002">
    <property type="entry name" value="Anthranilate phosphoribosyltransferase"/>
    <property type="match status" value="1"/>
</dbReference>
<dbReference type="Gene3D" id="3.40.1030.10">
    <property type="entry name" value="Nucleoside phosphorylase/phosphoribosyltransferase catalytic domain"/>
    <property type="match status" value="1"/>
</dbReference>
<dbReference type="Gene3D" id="1.20.970.10">
    <property type="entry name" value="Transferase, Pyrimidine Nucleoside Phosphorylase, Chain C"/>
    <property type="match status" value="1"/>
</dbReference>
<dbReference type="HAMAP" id="MF_00211">
    <property type="entry name" value="TrpD"/>
    <property type="match status" value="1"/>
</dbReference>
<dbReference type="InterPro" id="IPR005940">
    <property type="entry name" value="Anthranilate_Pribosyl_Tfrase"/>
</dbReference>
<dbReference type="InterPro" id="IPR000312">
    <property type="entry name" value="Glycosyl_Trfase_fam3"/>
</dbReference>
<dbReference type="InterPro" id="IPR017459">
    <property type="entry name" value="Glycosyl_Trfase_fam3_N_dom"/>
</dbReference>
<dbReference type="InterPro" id="IPR036320">
    <property type="entry name" value="Glycosyl_Trfase_fam3_N_dom_sf"/>
</dbReference>
<dbReference type="InterPro" id="IPR035902">
    <property type="entry name" value="Nuc_phospho_transferase"/>
</dbReference>
<dbReference type="NCBIfam" id="TIGR01245">
    <property type="entry name" value="trpD"/>
    <property type="match status" value="1"/>
</dbReference>
<dbReference type="PANTHER" id="PTHR43285">
    <property type="entry name" value="ANTHRANILATE PHOSPHORIBOSYLTRANSFERASE"/>
    <property type="match status" value="1"/>
</dbReference>
<dbReference type="PANTHER" id="PTHR43285:SF2">
    <property type="entry name" value="ANTHRANILATE PHOSPHORIBOSYLTRANSFERASE"/>
    <property type="match status" value="1"/>
</dbReference>
<dbReference type="Pfam" id="PF02885">
    <property type="entry name" value="Glycos_trans_3N"/>
    <property type="match status" value="1"/>
</dbReference>
<dbReference type="Pfam" id="PF00591">
    <property type="entry name" value="Glycos_transf_3"/>
    <property type="match status" value="1"/>
</dbReference>
<dbReference type="SUPFAM" id="SSF52418">
    <property type="entry name" value="Nucleoside phosphorylase/phosphoribosyltransferase catalytic domain"/>
    <property type="match status" value="1"/>
</dbReference>
<dbReference type="SUPFAM" id="SSF47648">
    <property type="entry name" value="Nucleoside phosphorylase/phosphoribosyltransferase N-terminal domain"/>
    <property type="match status" value="1"/>
</dbReference>